<proteinExistence type="evidence at protein level"/>
<gene>
    <name type="primary">Cp</name>
</gene>
<comment type="function">
    <text evidence="2 3 8">Multifunctional blue, copper-binding (6-7 atoms per molecule) glycoprotein. It has ferroxidase activity oxidizing Fe(2+) to Fe(3+) without releasing radical oxygen species. It is involved in iron transport across the cell membrane. Copper ions provide a large number of enzymatic activites. Oxidizes highly toxic ferrous ions to the ferric state for further incorporation onto apo-transferrins, catalyzes Cu(+) oxidation and promotes the oxidation of biogenic amines such as norepinephrin and serotonin (By similarity). Provides Cu(2+) ions for the ascorbate-mediated deaminase degradation of the heparan sulfate chains of GPC1 (By similarity). Has glutathione peroxidase-like activity, can remove both hydrogen peroxide and lipid hydroperoxide in the presence of thiols (By similarity). Also shows NO-oxidase and NO2 synthase activities that determine endocrine NO homeostasis (PubMed:29183916).</text>
</comment>
<comment type="catalytic activity">
    <reaction evidence="2">
        <text>4 Fe(2+) + O2 + 4 H(+) = 4 Fe(3+) + 2 H2O</text>
        <dbReference type="Rhea" id="RHEA:11148"/>
        <dbReference type="ChEBI" id="CHEBI:15377"/>
        <dbReference type="ChEBI" id="CHEBI:15378"/>
        <dbReference type="ChEBI" id="CHEBI:15379"/>
        <dbReference type="ChEBI" id="CHEBI:29033"/>
        <dbReference type="ChEBI" id="CHEBI:29034"/>
        <dbReference type="EC" id="1.16.3.1"/>
    </reaction>
    <physiologicalReaction direction="right-to-left" evidence="2">
        <dbReference type="Rhea" id="RHEA:11150"/>
    </physiologicalReaction>
</comment>
<comment type="catalytic activity">
    <reaction evidence="2">
        <text>4 Cu(+) + O2 + 4 H(+) = 4 Cu(2+) + 2 H2O</text>
        <dbReference type="Rhea" id="RHEA:30083"/>
        <dbReference type="ChEBI" id="CHEBI:15377"/>
        <dbReference type="ChEBI" id="CHEBI:15378"/>
        <dbReference type="ChEBI" id="CHEBI:15379"/>
        <dbReference type="ChEBI" id="CHEBI:29036"/>
        <dbReference type="ChEBI" id="CHEBI:49552"/>
        <dbReference type="EC" id="1.16.3.4"/>
    </reaction>
    <physiologicalReaction direction="left-to-right" evidence="2">
        <dbReference type="Rhea" id="RHEA:30084"/>
    </physiologicalReaction>
</comment>
<comment type="catalytic activity">
    <reaction evidence="2">
        <text>a hydroperoxide + 2 glutathione = an alcohol + glutathione disulfide + H2O</text>
        <dbReference type="Rhea" id="RHEA:62632"/>
        <dbReference type="ChEBI" id="CHEBI:15377"/>
        <dbReference type="ChEBI" id="CHEBI:30879"/>
        <dbReference type="ChEBI" id="CHEBI:35924"/>
        <dbReference type="ChEBI" id="CHEBI:57925"/>
        <dbReference type="ChEBI" id="CHEBI:58297"/>
        <dbReference type="EC" id="1.11.1.27"/>
    </reaction>
    <physiologicalReaction direction="left-to-right" evidence="2">
        <dbReference type="Rhea" id="RHEA:62633"/>
    </physiologicalReaction>
</comment>
<comment type="catalytic activity">
    <reaction evidence="2">
        <text>4 nitric oxide + O2 + 2 H2O = 4 nitrite + 4 H(+)</text>
        <dbReference type="Rhea" id="RHEA:78539"/>
        <dbReference type="ChEBI" id="CHEBI:15377"/>
        <dbReference type="ChEBI" id="CHEBI:15378"/>
        <dbReference type="ChEBI" id="CHEBI:15379"/>
        <dbReference type="ChEBI" id="CHEBI:16301"/>
        <dbReference type="ChEBI" id="CHEBI:16480"/>
    </reaction>
    <physiologicalReaction direction="left-to-right" evidence="2">
        <dbReference type="Rhea" id="RHEA:78540"/>
    </physiologicalReaction>
</comment>
<comment type="catalytic activity">
    <reaction evidence="2">
        <text>2 glutathione + H2O2 = glutathione disulfide + 2 H2O</text>
        <dbReference type="Rhea" id="RHEA:16833"/>
        <dbReference type="ChEBI" id="CHEBI:15377"/>
        <dbReference type="ChEBI" id="CHEBI:16240"/>
        <dbReference type="ChEBI" id="CHEBI:57925"/>
        <dbReference type="ChEBI" id="CHEBI:58297"/>
        <dbReference type="EC" id="1.11.1.9"/>
    </reaction>
    <physiologicalReaction direction="left-to-right" evidence="2">
        <dbReference type="Rhea" id="RHEA:16834"/>
    </physiologicalReaction>
</comment>
<comment type="cofactor">
    <cofactor evidence="2">
        <name>Cu(2+)</name>
        <dbReference type="ChEBI" id="CHEBI:29036"/>
    </cofactor>
    <text evidence="2">Binds 6 Cu(2+) cations per monomer.</text>
</comment>
<comment type="subunit">
    <text evidence="2">Found in a complex with MPO and LTF; interacts directly with MPO and LTF, which allows Fe(3+) incorporation into LTF, activation of CP ferroxidase activity and protection of CP antioxidant properties by MPO.</text>
</comment>
<comment type="subcellular location">
    <subcellularLocation>
        <location evidence="5">Secreted</location>
    </subcellularLocation>
    <text evidence="3">Colocalizes with GCP1 in secretory intracellular compartments.</text>
</comment>
<comment type="tissue specificity">
    <text evidence="9">Expressed in many tissues, including liver, eye and brain.</text>
</comment>
<comment type="disruption phenotype">
    <text evidence="5 8">Mutants show motor coordination impairment compared to wild-type animals (PubMed:29183916). Mutants blood show lower nitrite concentrations compared with wild-type controls (PubMed:16906150).</text>
</comment>
<comment type="similarity">
    <text evidence="10">Belongs to the multicopper oxidase family.</text>
</comment>
<reference key="1">
    <citation type="journal article" date="1996" name="J. Clin. Invest.">
        <title>Ceruloplasmin gene expression in the murine central nervous system.</title>
        <authorList>
            <person name="Klomp L.W.J."/>
            <person name="Farhangrazi Z.S."/>
            <person name="Dugan L.L."/>
            <person name="Gitlin J.D."/>
        </authorList>
    </citation>
    <scope>NUCLEOTIDE SEQUENCE [MRNA]</scope>
    <scope>TISSUE SPECIFICITY</scope>
</reference>
<reference key="2">
    <citation type="journal article" date="2004" name="Genome Res.">
        <title>The status, quality, and expansion of the NIH full-length cDNA project: the Mammalian Gene Collection (MGC).</title>
        <authorList>
            <consortium name="The MGC Project Team"/>
        </authorList>
    </citation>
    <scope>NUCLEOTIDE SEQUENCE [LARGE SCALE MRNA]</scope>
    <source>
        <strain>C57BL/6J</strain>
        <tissue>Eye</tissue>
    </source>
</reference>
<reference key="3">
    <citation type="journal article" date="2006" name="Nat. Chem. Biol.">
        <title>Ceruloplasmin is a NO oxidase and nitrite synthase that determines endocrine NO homeostasis.</title>
        <authorList>
            <person name="Shiva S."/>
            <person name="Wang X."/>
            <person name="Ringwood L.A."/>
            <person name="Xu X."/>
            <person name="Yuditskaya S."/>
            <person name="Annavajjhala V."/>
            <person name="Miyajima H."/>
            <person name="Hogg N."/>
            <person name="Harris Z.L."/>
            <person name="Gladwin M.T."/>
        </authorList>
    </citation>
    <scope>FUNCTION</scope>
    <scope>DISRUPTION PHENOTYPE</scope>
    <scope>SUBCELLULAR LOCATION</scope>
</reference>
<reference key="4">
    <citation type="journal article" date="2006" name="J. Proteome Res.">
        <title>Proteome-wide characterization of N-glycosylation events by diagonal chromatography.</title>
        <authorList>
            <person name="Ghesquiere B."/>
            <person name="Van Damme J."/>
            <person name="Martens L."/>
            <person name="Vandekerckhove J."/>
            <person name="Gevaert K."/>
        </authorList>
    </citation>
    <scope>GLYCOSYLATION [LARGE SCALE ANALYSIS] AT ASN-138 AND ASN-757</scope>
    <source>
        <strain>C57BL/6J</strain>
        <tissue>Plasma</tissue>
    </source>
</reference>
<reference key="5">
    <citation type="journal article" date="2007" name="J. Proteome Res.">
        <title>Enhanced analysis of the mouse plasma proteome using cysteine-containing tryptic glycopeptides.</title>
        <authorList>
            <person name="Bernhard O.K."/>
            <person name="Kapp E.A."/>
            <person name="Simpson R.J."/>
        </authorList>
    </citation>
    <scope>GLYCOSYLATION [LARGE SCALE ANALYSIS] AT ASN-138 AND ASN-757</scope>
    <source>
        <strain>C57BL/6J</strain>
        <tissue>Plasma</tissue>
    </source>
</reference>
<reference key="6">
    <citation type="journal article" date="2010" name="Cell">
        <title>A tissue-specific atlas of mouse protein phosphorylation and expression.</title>
        <authorList>
            <person name="Huttlin E.L."/>
            <person name="Jedrychowski M.P."/>
            <person name="Elias J.E."/>
            <person name="Goswami T."/>
            <person name="Rad R."/>
            <person name="Beausoleil S.A."/>
            <person name="Villen J."/>
            <person name="Haas W."/>
            <person name="Sowa M.E."/>
            <person name="Gygi S.P."/>
        </authorList>
    </citation>
    <scope>IDENTIFICATION BY MASS SPECTROMETRY [LARGE SCALE ANALYSIS]</scope>
    <source>
        <tissue>Brain</tissue>
        <tissue>Brown adipose tissue</tissue>
        <tissue>Heart</tissue>
        <tissue>Kidney</tissue>
        <tissue>Liver</tissue>
        <tissue>Lung</tissue>
        <tissue>Pancreas</tissue>
        <tissue>Spleen</tissue>
        <tissue>Testis</tissue>
    </source>
</reference>
<reference key="7">
    <citation type="journal article" date="2018" name="EMBO Mol. Med.">
        <title>Ceruloplasmin replacement therapy ameliorates neurological symptoms in a preclinical model of aceruloplasminemia.</title>
        <authorList>
            <person name="Zanardi A."/>
            <person name="Conti A."/>
            <person name="Cremonesi M."/>
            <person name="D'Adamo P."/>
            <person name="Gilberti E."/>
            <person name="Apostoli P."/>
            <person name="Cannistraci C.V."/>
            <person name="Piperno A."/>
            <person name="David S."/>
            <person name="Alessio M."/>
        </authorList>
    </citation>
    <scope>DISRUPTION PHENOTYPE</scope>
    <scope>CATALYTIC ACTIVITY</scope>
</reference>
<dbReference type="EC" id="1.16.3.4" evidence="2"/>
<dbReference type="EC" id="1.16.3.1" evidence="2"/>
<dbReference type="EC" id="1.11.1.9" evidence="2"/>
<dbReference type="EC" id="1.11.1.27" evidence="2"/>
<dbReference type="EMBL" id="U49430">
    <property type="protein sequence ID" value="AAB07996.1"/>
    <property type="molecule type" value="mRNA"/>
</dbReference>
<dbReference type="EMBL" id="BC062957">
    <property type="protein sequence ID" value="AAH62957.1"/>
    <property type="molecule type" value="mRNA"/>
</dbReference>
<dbReference type="CCDS" id="CCDS38401.1"/>
<dbReference type="RefSeq" id="NP_001263177.1">
    <property type="nucleotide sequence ID" value="NM_001276248.1"/>
</dbReference>
<dbReference type="RefSeq" id="NP_031778.2">
    <property type="nucleotide sequence ID" value="NM_007752.4"/>
</dbReference>
<dbReference type="SMR" id="Q61147"/>
<dbReference type="BioGRID" id="198851">
    <property type="interactions" value="5"/>
</dbReference>
<dbReference type="FunCoup" id="Q61147">
    <property type="interactions" value="220"/>
</dbReference>
<dbReference type="IntAct" id="Q61147">
    <property type="interactions" value="1"/>
</dbReference>
<dbReference type="STRING" id="10090.ENSMUSP00000103964"/>
<dbReference type="GlyConnect" id="689">
    <property type="glycosylation" value="2 N-Linked glycans (1 site)"/>
</dbReference>
<dbReference type="GlyCosmos" id="Q61147">
    <property type="glycosylation" value="6 sites, 4 glycans"/>
</dbReference>
<dbReference type="GlyGen" id="Q61147">
    <property type="glycosylation" value="7 sites, 6 N-linked glycans (2 sites), 1 O-linked glycan (1 site)"/>
</dbReference>
<dbReference type="iPTMnet" id="Q61147"/>
<dbReference type="PhosphoSitePlus" id="Q61147"/>
<dbReference type="SwissPalm" id="Q61147"/>
<dbReference type="CPTAC" id="non-CPTAC-3505"/>
<dbReference type="CPTAC" id="non-CPTAC-5587"/>
<dbReference type="jPOST" id="Q61147"/>
<dbReference type="PaxDb" id="10090-ENSMUSP00000088857"/>
<dbReference type="PeptideAtlas" id="Q61147"/>
<dbReference type="ProteomicsDB" id="280077"/>
<dbReference type="Pumba" id="Q61147"/>
<dbReference type="Antibodypedia" id="861">
    <property type="antibodies" value="383 antibodies from 36 providers"/>
</dbReference>
<dbReference type="DNASU" id="12870"/>
<dbReference type="Ensembl" id="ENSMUST00000091309.12">
    <property type="protein sequence ID" value="ENSMUSP00000088857.6"/>
    <property type="gene ID" value="ENSMUSG00000003617.17"/>
</dbReference>
<dbReference type="GeneID" id="12870"/>
<dbReference type="KEGG" id="mmu:12870"/>
<dbReference type="UCSC" id="uc008orz.2">
    <property type="organism name" value="mouse"/>
</dbReference>
<dbReference type="AGR" id="MGI:88476"/>
<dbReference type="CTD" id="1356"/>
<dbReference type="MGI" id="MGI:88476">
    <property type="gene designation" value="Cp"/>
</dbReference>
<dbReference type="VEuPathDB" id="HostDB:ENSMUSG00000003617"/>
<dbReference type="eggNOG" id="KOG1263">
    <property type="taxonomic scope" value="Eukaryota"/>
</dbReference>
<dbReference type="GeneTree" id="ENSGT00940000155866"/>
<dbReference type="InParanoid" id="Q61147"/>
<dbReference type="OMA" id="TTDHYAG"/>
<dbReference type="PhylomeDB" id="Q61147"/>
<dbReference type="TreeFam" id="TF329807"/>
<dbReference type="BRENDA" id="1.16.3.1">
    <property type="organism ID" value="3474"/>
</dbReference>
<dbReference type="Reactome" id="R-MMU-381426">
    <property type="pathway name" value="Regulation of Insulin-like Growth Factor (IGF) transport and uptake by Insulin-like Growth Factor Binding Proteins (IGFBPs)"/>
</dbReference>
<dbReference type="Reactome" id="R-MMU-425410">
    <property type="pathway name" value="Metal ion SLC transporters"/>
</dbReference>
<dbReference type="Reactome" id="R-MMU-8957275">
    <property type="pathway name" value="Post-translational protein phosphorylation"/>
</dbReference>
<dbReference type="Reactome" id="R-MMU-917937">
    <property type="pathway name" value="Iron uptake and transport"/>
</dbReference>
<dbReference type="BioGRID-ORCS" id="12870">
    <property type="hits" value="1 hit in 81 CRISPR screens"/>
</dbReference>
<dbReference type="ChiTaRS" id="Cp">
    <property type="organism name" value="mouse"/>
</dbReference>
<dbReference type="PRO" id="PR:Q61147"/>
<dbReference type="Proteomes" id="UP000000589">
    <property type="component" value="Chromosome 3"/>
</dbReference>
<dbReference type="RNAct" id="Q61147">
    <property type="molecule type" value="protein"/>
</dbReference>
<dbReference type="Bgee" id="ENSMUSG00000003617">
    <property type="expression patterns" value="Expressed in left lobe of liver and 197 other cell types or tissues"/>
</dbReference>
<dbReference type="ExpressionAtlas" id="Q61147">
    <property type="expression patterns" value="baseline and differential"/>
</dbReference>
<dbReference type="GO" id="GO:0005615">
    <property type="term" value="C:extracellular space"/>
    <property type="evidence" value="ECO:0000314"/>
    <property type="project" value="MGI"/>
</dbReference>
<dbReference type="GO" id="GO:0005507">
    <property type="term" value="F:copper ion binding"/>
    <property type="evidence" value="ECO:0000314"/>
    <property type="project" value="MGI"/>
</dbReference>
<dbReference type="GO" id="GO:0004322">
    <property type="term" value="F:ferroxidase activity"/>
    <property type="evidence" value="ECO:0000314"/>
    <property type="project" value="MGI"/>
</dbReference>
<dbReference type="GO" id="GO:0004602">
    <property type="term" value="F:glutathione peroxidase activity"/>
    <property type="evidence" value="ECO:0000250"/>
    <property type="project" value="UniProtKB"/>
</dbReference>
<dbReference type="GO" id="GO:0016724">
    <property type="term" value="F:oxidoreductase activity, acting on metal ions, oxygen as acceptor"/>
    <property type="evidence" value="ECO:0000250"/>
    <property type="project" value="UniProtKB"/>
</dbReference>
<dbReference type="GO" id="GO:0047066">
    <property type="term" value="F:phospholipid-hydroperoxide glutathione peroxidase activity"/>
    <property type="evidence" value="ECO:0000250"/>
    <property type="project" value="UniProtKB"/>
</dbReference>
<dbReference type="GO" id="GO:0061762">
    <property type="term" value="P:CAMKK-AMPK signaling cascade"/>
    <property type="evidence" value="ECO:0000315"/>
    <property type="project" value="MGI"/>
</dbReference>
<dbReference type="GO" id="GO:0019395">
    <property type="term" value="P:fatty acid oxidation"/>
    <property type="evidence" value="ECO:0000314"/>
    <property type="project" value="MGI"/>
</dbReference>
<dbReference type="GO" id="GO:0010467">
    <property type="term" value="P:gene expression"/>
    <property type="evidence" value="ECO:0000315"/>
    <property type="project" value="MGI"/>
</dbReference>
<dbReference type="GO" id="GO:0042593">
    <property type="term" value="P:glucose homeostasis"/>
    <property type="evidence" value="ECO:0000315"/>
    <property type="project" value="MGI"/>
</dbReference>
<dbReference type="GO" id="GO:0006954">
    <property type="term" value="P:inflammatory response"/>
    <property type="evidence" value="ECO:0000315"/>
    <property type="project" value="MGI"/>
</dbReference>
<dbReference type="GO" id="GO:0006878">
    <property type="term" value="P:intracellular copper ion homeostasis"/>
    <property type="evidence" value="ECO:0000315"/>
    <property type="project" value="MGI"/>
</dbReference>
<dbReference type="GO" id="GO:0006879">
    <property type="term" value="P:intracellular iron ion homeostasis"/>
    <property type="evidence" value="ECO:0000250"/>
    <property type="project" value="UniProtKB"/>
</dbReference>
<dbReference type="GO" id="GO:0016042">
    <property type="term" value="P:lipid catabolic process"/>
    <property type="evidence" value="ECO:0000315"/>
    <property type="project" value="MGI"/>
</dbReference>
<dbReference type="GO" id="GO:0001889">
    <property type="term" value="P:liver development"/>
    <property type="evidence" value="ECO:0000315"/>
    <property type="project" value="MGI"/>
</dbReference>
<dbReference type="GO" id="GO:0007005">
    <property type="term" value="P:mitochondrion organization"/>
    <property type="evidence" value="ECO:0000314"/>
    <property type="project" value="MGI"/>
</dbReference>
<dbReference type="GO" id="GO:0065003">
    <property type="term" value="P:protein-containing complex assembly"/>
    <property type="evidence" value="ECO:0000315"/>
    <property type="project" value="MGI"/>
</dbReference>
<dbReference type="GO" id="GO:0032868">
    <property type="term" value="P:response to insulin"/>
    <property type="evidence" value="ECO:0000315"/>
    <property type="project" value="MGI"/>
</dbReference>
<dbReference type="CDD" id="cd11021">
    <property type="entry name" value="CuRO_2_ceruloplasmin"/>
    <property type="match status" value="1"/>
</dbReference>
<dbReference type="CDD" id="cd04224">
    <property type="entry name" value="CuRO_3_ceruloplasmin"/>
    <property type="match status" value="1"/>
</dbReference>
<dbReference type="CDD" id="cd11022">
    <property type="entry name" value="CuRO_4_ceruloplasmin"/>
    <property type="match status" value="1"/>
</dbReference>
<dbReference type="CDD" id="cd04225">
    <property type="entry name" value="CuRO_5_ceruloplasmin"/>
    <property type="match status" value="1"/>
</dbReference>
<dbReference type="FunFam" id="2.60.40.420:FF:000009">
    <property type="entry name" value="Ceruloplasmin"/>
    <property type="match status" value="1"/>
</dbReference>
<dbReference type="FunFam" id="2.60.40.420:FF:000015">
    <property type="entry name" value="Ceruloplasmin"/>
    <property type="match status" value="1"/>
</dbReference>
<dbReference type="FunFam" id="2.60.40.420:FF:000028">
    <property type="entry name" value="Ceruloplasmin"/>
    <property type="match status" value="1"/>
</dbReference>
<dbReference type="FunFam" id="2.60.40.420:FF:000033">
    <property type="entry name" value="Ceruloplasmin"/>
    <property type="match status" value="1"/>
</dbReference>
<dbReference type="FunFam" id="2.60.40.420:FF:000037">
    <property type="entry name" value="Ceruloplasmin"/>
    <property type="match status" value="1"/>
</dbReference>
<dbReference type="Gene3D" id="2.60.40.420">
    <property type="entry name" value="Cupredoxins - blue copper proteins"/>
    <property type="match status" value="5"/>
</dbReference>
<dbReference type="InterPro" id="IPR048236">
    <property type="entry name" value="Ceruloplasmin-like_CuRO_5"/>
</dbReference>
<dbReference type="InterPro" id="IPR011707">
    <property type="entry name" value="Cu-oxidase-like_N"/>
</dbReference>
<dbReference type="InterPro" id="IPR001117">
    <property type="entry name" value="Cu-oxidase_2nd"/>
</dbReference>
<dbReference type="InterPro" id="IPR011706">
    <property type="entry name" value="Cu-oxidase_C"/>
</dbReference>
<dbReference type="InterPro" id="IPR045087">
    <property type="entry name" value="Cu-oxidase_fam"/>
</dbReference>
<dbReference type="InterPro" id="IPR033138">
    <property type="entry name" value="Cu_oxidase_CS"/>
</dbReference>
<dbReference type="InterPro" id="IPR002355">
    <property type="entry name" value="Cu_oxidase_Cu_BS"/>
</dbReference>
<dbReference type="InterPro" id="IPR008972">
    <property type="entry name" value="Cupredoxin"/>
</dbReference>
<dbReference type="InterPro" id="IPR024715">
    <property type="entry name" value="Factor_5/8-like"/>
</dbReference>
<dbReference type="PANTHER" id="PTHR11709:SF226">
    <property type="entry name" value="CERULOPLASMIN"/>
    <property type="match status" value="1"/>
</dbReference>
<dbReference type="PANTHER" id="PTHR11709">
    <property type="entry name" value="MULTI-COPPER OXIDASE"/>
    <property type="match status" value="1"/>
</dbReference>
<dbReference type="Pfam" id="PF00394">
    <property type="entry name" value="Cu-oxidase"/>
    <property type="match status" value="1"/>
</dbReference>
<dbReference type="Pfam" id="PF07731">
    <property type="entry name" value="Cu-oxidase_2"/>
    <property type="match status" value="1"/>
</dbReference>
<dbReference type="Pfam" id="PF07732">
    <property type="entry name" value="Cu-oxidase_3"/>
    <property type="match status" value="2"/>
</dbReference>
<dbReference type="PIRSF" id="PIRSF000354">
    <property type="entry name" value="Factors_V_VIII"/>
    <property type="match status" value="1"/>
</dbReference>
<dbReference type="SUPFAM" id="SSF49503">
    <property type="entry name" value="Cupredoxins"/>
    <property type="match status" value="6"/>
</dbReference>
<dbReference type="PROSITE" id="PS00079">
    <property type="entry name" value="MULTICOPPER_OXIDASE1"/>
    <property type="match status" value="3"/>
</dbReference>
<dbReference type="PROSITE" id="PS00080">
    <property type="entry name" value="MULTICOPPER_OXIDASE2"/>
    <property type="match status" value="1"/>
</dbReference>
<sequence length="1061" mass="121151">MKFLLLSTFIFLYSSLALARDKHYFIGITEAVWDYASGTEEKKLISVDTEQSNFYLQNGPDRIGRKYKKALYFEYTDGTFSKTIDKPAWLGFLGPVIKAEVEDKVYVHLKNLASRIYTFHAHGVTYTKEYEGAVYPDNTTDFQRADDKVLPGQQYVYVLHANEPSPGEGDSNCVTRIYHSHVDAPKDIASGLIGPLILCKKGSLYKEKEKNIDQEFVLMFSVVDENLSWYLEDNIKTFCSEPEKVDKDNEDFQESNRMYSINGYTFGSLPGLSMCAADRVKWYLFGMGNEVDVHSAFFHGQALTSRNYQTDIINLFPATLIDAYMVAQNPGVWMLSCQNLNHLKAGLQAFFQVRDCNKPSPEDNIQDRHVRHYYIAAEEVIWNYAPSGTDIFTGENLTALESDSRVFFEQGATRIGGSYKKMAYREYTDGSFTNRKQRGPDEEHLGILGPVIWAEVGDTIKVTFHNKGQHPLSIQPMGVSFTAENEGTYYGPPGRSSQQAASHVAPKETFTYEWTVPKEMGPTYADPVCLSKMYYSGVDPTKDIFTGLIGPMKICKKGSLLADGRQKDVDKEFYLFPTVFDENESLLLDDNIRMFTTAPDQVDKEDEDFQESNKMHSMNGFMYGNQPGLNMCLGESIVWYLFSAGNEADVHGIYFSGNTYLSKGERRDTANLFPHKSLTLLMNPDTKGTFDVECLTTDHYTGGMKQKYTVNQCQRQFEDFTVYLGERTYYVAAVEVEWDYSPSRAWEKELHHLQEQNVSNVFLDKEEFFIGSKYKKVVYRQFTDSSFREQVKRRAEDEHLGILGPPIHANVGDKVKVVFKNMATRPYSIHAHGVKTESSTVVPTLPGEVRTYTWQIPERSGAGREDSACIPWAYYSTVDRVKDLYSGLIGPLIVCRKSYVKVFSPKKKMEFFLLFLVFDENESWYLDDNIKTYSEHPEKVNKDNEEFLESNKMHAINGKMFGNLQGLTMHVKDEVNWYVMGMGNEIDLHTVHFHGHSFQYKHRGVYSSDVFDLFPGTYQTLEMFPQTPGTWLLHCHVTDHVHAGMATTYTVLPVEQETKSG</sequence>
<organism>
    <name type="scientific">Mus musculus</name>
    <name type="common">Mouse</name>
    <dbReference type="NCBI Taxonomy" id="10090"/>
    <lineage>
        <taxon>Eukaryota</taxon>
        <taxon>Metazoa</taxon>
        <taxon>Chordata</taxon>
        <taxon>Craniata</taxon>
        <taxon>Vertebrata</taxon>
        <taxon>Euteleostomi</taxon>
        <taxon>Mammalia</taxon>
        <taxon>Eutheria</taxon>
        <taxon>Euarchontoglires</taxon>
        <taxon>Glires</taxon>
        <taxon>Rodentia</taxon>
        <taxon>Myomorpha</taxon>
        <taxon>Muroidea</taxon>
        <taxon>Muridae</taxon>
        <taxon>Murinae</taxon>
        <taxon>Mus</taxon>
        <taxon>Mus</taxon>
    </lineage>
</organism>
<protein>
    <recommendedName>
        <fullName>Ceruloplasmin</fullName>
    </recommendedName>
    <alternativeName>
        <fullName>Cuproxidase ceruloplasmin</fullName>
        <ecNumber evidence="2">1.16.3.4</ecNumber>
    </alternativeName>
    <alternativeName>
        <fullName>Ferroxidase ceruloplasmin</fullName>
        <ecNumber evidence="2">1.16.3.1</ecNumber>
    </alternativeName>
    <alternativeName>
        <fullName>Glutathione peroxidase ceruloplasmin</fullName>
        <ecNumber evidence="2">1.11.1.9</ecNumber>
    </alternativeName>
    <alternativeName>
        <fullName>Glutathione-dependent peroxiredoxin ceruloplasmin</fullName>
        <ecNumber evidence="2">1.11.1.27</ecNumber>
    </alternativeName>
</protein>
<evidence type="ECO:0000250" key="1"/>
<evidence type="ECO:0000250" key="2">
    <source>
        <dbReference type="UniProtKB" id="P00450"/>
    </source>
</evidence>
<evidence type="ECO:0000250" key="3">
    <source>
        <dbReference type="UniProtKB" id="P13635"/>
    </source>
</evidence>
<evidence type="ECO:0000255" key="4"/>
<evidence type="ECO:0000269" key="5">
    <source>
    </source>
</evidence>
<evidence type="ECO:0000269" key="6">
    <source>
    </source>
</evidence>
<evidence type="ECO:0000269" key="7">
    <source>
    </source>
</evidence>
<evidence type="ECO:0000269" key="8">
    <source>
    </source>
</evidence>
<evidence type="ECO:0000269" key="9">
    <source>
    </source>
</evidence>
<evidence type="ECO:0000305" key="10"/>
<accession>Q61147</accession>
<accession>Q6P5C8</accession>
<keyword id="KW-0106">Calcium</keyword>
<keyword id="KW-1015">Disulfide bond</keyword>
<keyword id="KW-0325">Glycoprotein</keyword>
<keyword id="KW-0479">Metal-binding</keyword>
<keyword id="KW-0560">Oxidoreductase</keyword>
<keyword id="KW-1185">Reference proteome</keyword>
<keyword id="KW-0677">Repeat</keyword>
<keyword id="KW-0964">Secreted</keyword>
<keyword id="KW-0732">Signal</keyword>
<keyword id="KW-0915">Sodium</keyword>
<feature type="signal peptide" evidence="1">
    <location>
        <begin position="1"/>
        <end position="19"/>
    </location>
</feature>
<feature type="chain" id="PRO_0000002913" description="Ceruloplasmin">
    <location>
        <begin position="20"/>
        <end position="1061"/>
    </location>
</feature>
<feature type="domain" description="Plastocyanin-like 1" evidence="2">
    <location>
        <begin position="20"/>
        <end position="199"/>
    </location>
</feature>
<feature type="domain" description="Plastocyanin-like 2" evidence="2">
    <location>
        <begin position="208"/>
        <end position="356"/>
    </location>
</feature>
<feature type="domain" description="Plastocyanin-like 3" evidence="2">
    <location>
        <begin position="369"/>
        <end position="555"/>
    </location>
</feature>
<feature type="domain" description="Plastocyanin-like 4" evidence="2">
    <location>
        <begin position="565"/>
        <end position="713"/>
    </location>
</feature>
<feature type="domain" description="Plastocyanin-like 5" evidence="2">
    <location>
        <begin position="725"/>
        <end position="895"/>
    </location>
</feature>
<feature type="domain" description="Plastocyanin-like 6" evidence="2">
    <location>
        <begin position="903"/>
        <end position="1057"/>
    </location>
</feature>
<feature type="active site" description="Nucleophile; for glutathione peroxidase activity" evidence="2">
    <location>
        <position position="694"/>
    </location>
</feature>
<feature type="binding site" evidence="2">
    <location>
        <position position="55"/>
    </location>
    <ligand>
        <name>Na(+)</name>
        <dbReference type="ChEBI" id="CHEBI:29101"/>
        <label>1</label>
    </ligand>
</feature>
<feature type="binding site" evidence="2">
    <location>
        <position position="64"/>
    </location>
    <ligand>
        <name>Na(+)</name>
        <dbReference type="ChEBI" id="CHEBI:29101"/>
        <label>1</label>
    </ligand>
</feature>
<feature type="binding site" evidence="2">
    <location>
        <position position="67"/>
    </location>
    <ligand>
        <name>Na(+)</name>
        <dbReference type="ChEBI" id="CHEBI:29101"/>
        <label>1</label>
    </ligand>
</feature>
<feature type="binding site" description="type 2 copper site" evidence="2">
    <location>
        <position position="120"/>
    </location>
    <ligand>
        <name>Cu(2+)</name>
        <dbReference type="ChEBI" id="CHEBI:29036"/>
        <label>1</label>
    </ligand>
</feature>
<feature type="binding site" evidence="2">
    <location>
        <position position="120"/>
    </location>
    <ligand>
        <name>O2</name>
        <dbReference type="ChEBI" id="CHEBI:15379"/>
    </ligand>
</feature>
<feature type="binding site" description="type 3 copper site" evidence="2">
    <location>
        <position position="122"/>
    </location>
    <ligand>
        <name>Cu(2+)</name>
        <dbReference type="ChEBI" id="CHEBI:29036"/>
        <label>2</label>
    </ligand>
</feature>
<feature type="binding site" evidence="2">
    <location>
        <position position="128"/>
    </location>
    <ligand>
        <name>Ca(2+)</name>
        <dbReference type="ChEBI" id="CHEBI:29108"/>
    </ligand>
</feature>
<feature type="binding site" evidence="2">
    <location>
        <position position="143"/>
    </location>
    <ligand>
        <name>Ca(2+)</name>
        <dbReference type="ChEBI" id="CHEBI:29108"/>
    </ligand>
</feature>
<feature type="binding site" evidence="2">
    <location>
        <position position="146"/>
    </location>
    <ligand>
        <name>Ca(2+)</name>
        <dbReference type="ChEBI" id="CHEBI:29108"/>
    </ligand>
</feature>
<feature type="binding site" evidence="2">
    <location>
        <position position="147"/>
    </location>
    <ligand>
        <name>Ca(2+)</name>
        <dbReference type="ChEBI" id="CHEBI:29108"/>
    </ligand>
</feature>
<feature type="binding site" description="type 3 copper site" evidence="2">
    <location>
        <position position="179"/>
    </location>
    <ligand>
        <name>Cu(2+)</name>
        <dbReference type="ChEBI" id="CHEBI:29036"/>
        <label>2</label>
    </ligand>
</feature>
<feature type="binding site" evidence="2">
    <location>
        <position position="179"/>
    </location>
    <ligand>
        <name>O2</name>
        <dbReference type="ChEBI" id="CHEBI:15379"/>
    </ligand>
</feature>
<feature type="binding site" description="type 3 copper site" evidence="2">
    <location>
        <position position="181"/>
    </location>
    <ligand>
        <name>Cu(2+)</name>
        <dbReference type="ChEBI" id="CHEBI:29036"/>
        <label>3</label>
    </ligand>
</feature>
<feature type="binding site" evidence="2">
    <location>
        <position position="255"/>
    </location>
    <ligand>
        <name>Na(+)</name>
        <dbReference type="ChEBI" id="CHEBI:29101"/>
        <label>1</label>
    </ligand>
</feature>
<feature type="binding site" description="type 1 copper site" evidence="2">
    <location>
        <position position="294"/>
    </location>
    <ligand>
        <name>Cu(2+)</name>
        <dbReference type="ChEBI" id="CHEBI:29036"/>
        <label>4</label>
    </ligand>
</feature>
<feature type="binding site" description="type 1 copper site" evidence="2">
    <location>
        <position position="337"/>
    </location>
    <ligand>
        <name>Cu(2+)</name>
        <dbReference type="ChEBI" id="CHEBI:29036"/>
        <label>4</label>
    </ligand>
</feature>
<feature type="binding site" description="type 1 copper site" evidence="2">
    <location>
        <position position="342"/>
    </location>
    <ligand>
        <name>Cu(2+)</name>
        <dbReference type="ChEBI" id="CHEBI:29036"/>
        <label>4</label>
    </ligand>
</feature>
<feature type="binding site" evidence="2">
    <location>
        <position position="407"/>
    </location>
    <ligand>
        <name>Na(+)</name>
        <dbReference type="ChEBI" id="CHEBI:29101"/>
        <label>2</label>
    </ligand>
</feature>
<feature type="binding site" evidence="2">
    <location>
        <position position="416"/>
    </location>
    <ligand>
        <name>Na(+)</name>
        <dbReference type="ChEBI" id="CHEBI:29101"/>
        <label>2</label>
    </ligand>
</feature>
<feature type="binding site" evidence="2">
    <location>
        <position position="419"/>
    </location>
    <ligand>
        <name>Na(+)</name>
        <dbReference type="ChEBI" id="CHEBI:29101"/>
        <label>2</label>
    </ligand>
</feature>
<feature type="binding site" evidence="2">
    <location>
        <position position="612"/>
    </location>
    <ligand>
        <name>Na(+)</name>
        <dbReference type="ChEBI" id="CHEBI:29101"/>
        <label>2</label>
    </ligand>
</feature>
<feature type="binding site" description="type 1 copper site" evidence="2">
    <location>
        <position position="651"/>
    </location>
    <ligand>
        <name>Cu(2+)</name>
        <dbReference type="ChEBI" id="CHEBI:29036"/>
        <label>5</label>
    </ligand>
</feature>
<feature type="binding site" description="type 1 copper site" evidence="2">
    <location>
        <position position="694"/>
    </location>
    <ligand>
        <name>Cu(2+)</name>
        <dbReference type="ChEBI" id="CHEBI:29036"/>
        <label>5</label>
    </ligand>
</feature>
<feature type="binding site" description="type 1 copper site" evidence="2">
    <location>
        <position position="699"/>
    </location>
    <ligand>
        <name>Cu(2+)</name>
        <dbReference type="ChEBI" id="CHEBI:29036"/>
        <label>5</label>
    </ligand>
</feature>
<feature type="binding site" description="type 1 copper site" evidence="2">
    <location>
        <position position="704"/>
    </location>
    <ligand>
        <name>Cu(2+)</name>
        <dbReference type="ChEBI" id="CHEBI:29036"/>
        <label>5</label>
    </ligand>
</feature>
<feature type="binding site" evidence="2">
    <location>
        <position position="762"/>
    </location>
    <ligand>
        <name>Na(+)</name>
        <dbReference type="ChEBI" id="CHEBI:29101"/>
        <label>3</label>
    </ligand>
</feature>
<feature type="binding site" evidence="2">
    <location>
        <position position="771"/>
    </location>
    <ligand>
        <name>Na(+)</name>
        <dbReference type="ChEBI" id="CHEBI:29101"/>
        <label>3</label>
    </ligand>
</feature>
<feature type="binding site" evidence="2">
    <location>
        <position position="774"/>
    </location>
    <ligand>
        <name>Na(+)</name>
        <dbReference type="ChEBI" id="CHEBI:29101"/>
        <label>3</label>
    </ligand>
</feature>
<feature type="binding site" evidence="2">
    <location>
        <position position="950"/>
    </location>
    <ligand>
        <name>Na(+)</name>
        <dbReference type="ChEBI" id="CHEBI:29101"/>
        <label>3</label>
    </ligand>
</feature>
<feature type="binding site" description="type 1 copper site" evidence="2">
    <location>
        <position position="989"/>
    </location>
    <ligand>
        <name>Cu(2+)</name>
        <dbReference type="ChEBI" id="CHEBI:29036"/>
        <label>6</label>
    </ligand>
</feature>
<feature type="binding site" description="type 2 copper site" evidence="2">
    <location>
        <position position="992"/>
    </location>
    <ligand>
        <name>Cu(2+)</name>
        <dbReference type="ChEBI" id="CHEBI:29036"/>
        <label>1</label>
    </ligand>
</feature>
<feature type="binding site" evidence="2">
    <location>
        <position position="992"/>
    </location>
    <ligand>
        <name>O2</name>
        <dbReference type="ChEBI" id="CHEBI:15379"/>
    </ligand>
</feature>
<feature type="binding site" description="type 3 copper site" evidence="2">
    <location>
        <position position="994"/>
    </location>
    <ligand>
        <name>Cu(2+)</name>
        <dbReference type="ChEBI" id="CHEBI:29036"/>
        <label>3</label>
    </ligand>
</feature>
<feature type="binding site" evidence="2">
    <location>
        <position position="994"/>
    </location>
    <ligand>
        <name>O2</name>
        <dbReference type="ChEBI" id="CHEBI:15379"/>
    </ligand>
</feature>
<feature type="binding site" description="type 3 copper site" evidence="2">
    <location>
        <position position="1034"/>
    </location>
    <ligand>
        <name>Cu(2+)</name>
        <dbReference type="ChEBI" id="CHEBI:29036"/>
        <label>3</label>
    </ligand>
</feature>
<feature type="binding site" description="type 1 copper site" evidence="2">
    <location>
        <position position="1035"/>
    </location>
    <ligand>
        <name>Cu(2+)</name>
        <dbReference type="ChEBI" id="CHEBI:29036"/>
        <label>6</label>
    </ligand>
</feature>
<feature type="binding site" description="type 3 copper site" evidence="2">
    <location>
        <position position="1036"/>
    </location>
    <ligand>
        <name>Cu(2+)</name>
        <dbReference type="ChEBI" id="CHEBI:29036"/>
        <label>2</label>
    </ligand>
</feature>
<feature type="binding site" evidence="2">
    <location>
        <position position="1036"/>
    </location>
    <ligand>
        <name>O2</name>
        <dbReference type="ChEBI" id="CHEBI:15379"/>
    </ligand>
</feature>
<feature type="binding site" description="type 1 copper site" evidence="2">
    <location>
        <position position="1040"/>
    </location>
    <ligand>
        <name>Cu(2+)</name>
        <dbReference type="ChEBI" id="CHEBI:29036"/>
        <label>6</label>
    </ligand>
</feature>
<feature type="binding site" description="type 1 copper site" evidence="2">
    <location>
        <position position="1045"/>
    </location>
    <ligand>
        <name>Cu(2+)</name>
        <dbReference type="ChEBI" id="CHEBI:29036"/>
        <label>6</label>
    </ligand>
</feature>
<feature type="glycosylation site" description="N-linked (GlcNAc...) asparagine" evidence="6 7">
    <location>
        <position position="138"/>
    </location>
</feature>
<feature type="glycosylation site" description="N-linked (GlcNAc...) asparagine" evidence="4">
    <location>
        <position position="226"/>
    </location>
</feature>
<feature type="glycosylation site" description="N-linked (GlcNAc...) asparagine" evidence="4">
    <location>
        <position position="396"/>
    </location>
</feature>
<feature type="glycosylation site" description="N-linked (GlcNAc...) asparagine" evidence="4">
    <location>
        <position position="583"/>
    </location>
</feature>
<feature type="glycosylation site" description="N-linked (GlcNAc...) asparagine" evidence="6 7">
    <location>
        <position position="757"/>
    </location>
</feature>
<feature type="glycosylation site" description="N-linked (GlcNAc...) asparagine" evidence="4">
    <location>
        <position position="921"/>
    </location>
</feature>
<feature type="disulfide bond" evidence="2">
    <location>
        <begin position="173"/>
        <end position="199"/>
    </location>
</feature>
<feature type="disulfide bond" evidence="2">
    <location>
        <begin position="275"/>
        <end position="356"/>
    </location>
</feature>
<feature type="disulfide bond" evidence="2">
    <location>
        <begin position="529"/>
        <end position="555"/>
    </location>
</feature>
<feature type="disulfide bond" evidence="2">
    <location>
        <begin position="632"/>
        <end position="713"/>
    </location>
</feature>
<feature type="disulfide bond" evidence="2">
    <location>
        <begin position="869"/>
        <end position="895"/>
    </location>
</feature>
<feature type="sequence conflict" description="In Ref. 1; AAB07996." evidence="10" ref="1">
    <original>R</original>
    <variation>Q</variation>
    <location>
        <position position="354"/>
    </location>
</feature>
<feature type="sequence conflict" description="In Ref. 1; AAB07996." evidence="10" ref="1">
    <original>PE</original>
    <variation>SK</variation>
    <location>
        <begin position="361"/>
        <end position="362"/>
    </location>
</feature>
<feature type="sequence conflict" description="In Ref. 1; AAB07996." evidence="10" ref="1">
    <original>QDR</original>
    <variation>RGK</variation>
    <location>
        <begin position="366"/>
        <end position="368"/>
    </location>
</feature>
<feature type="sequence conflict" description="In Ref. 1; AAB07996." evidence="10" ref="1">
    <original>T</original>
    <variation>I</variation>
    <location>
        <position position="389"/>
    </location>
</feature>
<feature type="sequence conflict" description="In Ref. 1; AAB07996." evidence="10" ref="1">
    <original>GEN</original>
    <variation>EEK</variation>
    <location>
        <begin position="394"/>
        <end position="396"/>
    </location>
</feature>
<feature type="sequence conflict" description="In Ref. 1; AAB07996." evidence="10" ref="1">
    <original>LE</original>
    <variation>SG</variation>
    <location>
        <begin position="400"/>
        <end position="401"/>
    </location>
</feature>
<feature type="sequence conflict" description="In Ref. 1; AAB07996." evidence="10" ref="1">
    <original>R</original>
    <variation>G</variation>
    <location>
        <position position="405"/>
    </location>
</feature>
<feature type="sequence conflict" description="In Ref. 1; AAB07996." evidence="10" ref="1">
    <original>Q</original>
    <variation>E</variation>
    <location>
        <position position="437"/>
    </location>
</feature>
<feature type="sequence conflict" description="In Ref. 1; AAB07996." evidence="10" ref="1">
    <original>P</original>
    <variation>H</variation>
    <location>
        <position position="471"/>
    </location>
</feature>
<feature type="sequence conflict" description="In Ref. 1; AAB07996." evidence="10" ref="1">
    <original>R</original>
    <variation>A</variation>
    <location>
        <position position="495"/>
    </location>
</feature>
<feature type="sequence conflict" description="In Ref. 1; AAB07996." evidence="10" ref="1">
    <original>G</original>
    <variation>A</variation>
    <location>
        <position position="537"/>
    </location>
</feature>
<feature type="sequence conflict" description="In Ref. 1; AAB07996." evidence="10" ref="1">
    <original>T</original>
    <variation>H</variation>
    <location>
        <position position="597"/>
    </location>
</feature>
<feature type="sequence conflict" description="In Ref. 1; AAB07996." evidence="10" ref="1">
    <original>PGLN</original>
    <variation>SWPH</variation>
    <location>
        <begin position="627"/>
        <end position="630"/>
    </location>
</feature>
<feature type="sequence conflict" description="In Ref. 1; AAB07996." evidence="10" ref="1">
    <original>S</original>
    <variation>C</variation>
    <location>
        <position position="662"/>
    </location>
</feature>
<feature type="sequence conflict" description="In Ref. 1; AAB07996." evidence="10" ref="1">
    <original>R</original>
    <variation>E</variation>
    <location>
        <position position="666"/>
    </location>
</feature>
<feature type="sequence conflict" description="In Ref. 1; AAB07996." evidence="10" ref="1">
    <original>A</original>
    <variation>D</variation>
    <location>
        <position position="732"/>
    </location>
</feature>
<feature type="sequence conflict" description="In Ref. 1; AAB07996." evidence="10" ref="1">
    <original>E</original>
    <variation>EE</variation>
    <location>
        <position position="796"/>
    </location>
</feature>
<feature type="sequence conflict" description="In Ref. 1; AAB07996." evidence="10" ref="1">
    <original>R</original>
    <variation>A</variation>
    <location>
        <position position="850"/>
    </location>
</feature>
<feature type="sequence conflict" description="In Ref. 1; AAB07996." evidence="10" ref="1">
    <original>V</original>
    <variation>L</variation>
    <location>
        <position position="979"/>
    </location>
</feature>
<name>CERU_MOUSE</name>